<dbReference type="EC" id="2.3.2.27" evidence="6"/>
<dbReference type="EMBL" id="AC006234">
    <property type="protein sequence ID" value="AAM15208.1"/>
    <property type="status" value="ALT_SEQ"/>
    <property type="molecule type" value="Genomic_DNA"/>
</dbReference>
<dbReference type="EMBL" id="AC007048">
    <property type="protein sequence ID" value="AAD21704.2"/>
    <property type="status" value="ALT_SEQ"/>
    <property type="molecule type" value="Genomic_DNA"/>
</dbReference>
<dbReference type="EMBL" id="CP002685">
    <property type="protein sequence ID" value="AEC07052.1"/>
    <property type="molecule type" value="Genomic_DNA"/>
</dbReference>
<dbReference type="EMBL" id="CP002685">
    <property type="protein sequence ID" value="AEC07053.1"/>
    <property type="molecule type" value="Genomic_DNA"/>
</dbReference>
<dbReference type="EMBL" id="BT022115">
    <property type="protein sequence ID" value="AAY34176.1"/>
    <property type="molecule type" value="mRNA"/>
</dbReference>
<dbReference type="PIR" id="F84591">
    <property type="entry name" value="F84591"/>
</dbReference>
<dbReference type="RefSeq" id="NP_179657.2">
    <property type="nucleotide sequence ID" value="NM_127629.4"/>
</dbReference>
<dbReference type="RefSeq" id="NP_973491.1">
    <property type="nucleotide sequence ID" value="NM_201762.2"/>
</dbReference>
<dbReference type="FunCoup" id="Q500V2">
    <property type="interactions" value="745"/>
</dbReference>
<dbReference type="STRING" id="3702.Q500V2"/>
<dbReference type="iPTMnet" id="Q500V2"/>
<dbReference type="PaxDb" id="3702-AT2G20650.1"/>
<dbReference type="ProteomicsDB" id="230544"/>
<dbReference type="EnsemblPlants" id="AT2G20650.1">
    <property type="protein sequence ID" value="AT2G20650.1"/>
    <property type="gene ID" value="AT2G20650"/>
</dbReference>
<dbReference type="EnsemblPlants" id="AT2G20650.2">
    <property type="protein sequence ID" value="AT2G20650.2"/>
    <property type="gene ID" value="AT2G20650"/>
</dbReference>
<dbReference type="GeneID" id="816593"/>
<dbReference type="Gramene" id="AT2G20650.1">
    <property type="protein sequence ID" value="AT2G20650.1"/>
    <property type="gene ID" value="AT2G20650"/>
</dbReference>
<dbReference type="Gramene" id="AT2G20650.2">
    <property type="protein sequence ID" value="AT2G20650.2"/>
    <property type="gene ID" value="AT2G20650"/>
</dbReference>
<dbReference type="KEGG" id="ath:AT2G20650"/>
<dbReference type="Araport" id="AT2G20650"/>
<dbReference type="TAIR" id="AT2G20650">
    <property type="gene designation" value="FLY2"/>
</dbReference>
<dbReference type="eggNOG" id="KOG0828">
    <property type="taxonomic scope" value="Eukaryota"/>
</dbReference>
<dbReference type="HOGENOM" id="CLU_038877_0_0_1"/>
<dbReference type="InParanoid" id="Q500V2"/>
<dbReference type="OMA" id="RDRYHIE"/>
<dbReference type="OrthoDB" id="9984778at2759"/>
<dbReference type="PhylomeDB" id="Q500V2"/>
<dbReference type="UniPathway" id="UPA00143"/>
<dbReference type="PRO" id="PR:Q500V2"/>
<dbReference type="Proteomes" id="UP000006548">
    <property type="component" value="Chromosome 2"/>
</dbReference>
<dbReference type="ExpressionAtlas" id="Q500V2">
    <property type="expression patterns" value="baseline and differential"/>
</dbReference>
<dbReference type="GO" id="GO:0012505">
    <property type="term" value="C:endomembrane system"/>
    <property type="evidence" value="ECO:0007669"/>
    <property type="project" value="UniProtKB-SubCell"/>
</dbReference>
<dbReference type="GO" id="GO:0016020">
    <property type="term" value="C:membrane"/>
    <property type="evidence" value="ECO:0007669"/>
    <property type="project" value="UniProtKB-KW"/>
</dbReference>
<dbReference type="GO" id="GO:0004842">
    <property type="term" value="F:ubiquitin-protein transferase activity"/>
    <property type="evidence" value="ECO:0000250"/>
    <property type="project" value="TAIR"/>
</dbReference>
<dbReference type="GO" id="GO:0008270">
    <property type="term" value="F:zinc ion binding"/>
    <property type="evidence" value="ECO:0007669"/>
    <property type="project" value="UniProtKB-KW"/>
</dbReference>
<dbReference type="GO" id="GO:0009827">
    <property type="term" value="P:plant-type cell wall modification"/>
    <property type="evidence" value="ECO:0000250"/>
    <property type="project" value="TAIR"/>
</dbReference>
<dbReference type="GO" id="GO:0016567">
    <property type="term" value="P:protein ubiquitination"/>
    <property type="evidence" value="ECO:0007669"/>
    <property type="project" value="UniProtKB-UniPathway"/>
</dbReference>
<dbReference type="CDD" id="cd23117">
    <property type="entry name" value="RING-H2_TUL1-like"/>
    <property type="match status" value="1"/>
</dbReference>
<dbReference type="FunFam" id="3.30.40.10:FF:000338">
    <property type="entry name" value="E3 ubiquitin-protein ligase, putative"/>
    <property type="match status" value="1"/>
</dbReference>
<dbReference type="Gene3D" id="3.30.40.10">
    <property type="entry name" value="Zinc/RING finger domain, C3HC4 (zinc finger)"/>
    <property type="match status" value="1"/>
</dbReference>
<dbReference type="InterPro" id="IPR021319">
    <property type="entry name" value="DUF2921"/>
</dbReference>
<dbReference type="InterPro" id="IPR050731">
    <property type="entry name" value="HRD1_E3_ubiq-ligases"/>
</dbReference>
<dbReference type="InterPro" id="IPR001841">
    <property type="entry name" value="Znf_RING"/>
</dbReference>
<dbReference type="InterPro" id="IPR013083">
    <property type="entry name" value="Znf_RING/FYVE/PHD"/>
</dbReference>
<dbReference type="PANTHER" id="PTHR22763">
    <property type="entry name" value="RING ZINC FINGER PROTEIN"/>
    <property type="match status" value="1"/>
</dbReference>
<dbReference type="PANTHER" id="PTHR22763:SF172">
    <property type="entry name" value="TRANSMEMBRANE E3 UBIQUITIN-PROTEIN LIGASE FLY2"/>
    <property type="match status" value="1"/>
</dbReference>
<dbReference type="Pfam" id="PF11145">
    <property type="entry name" value="DUF2921"/>
    <property type="match status" value="1"/>
</dbReference>
<dbReference type="Pfam" id="PF13639">
    <property type="entry name" value="zf-RING_2"/>
    <property type="match status" value="1"/>
</dbReference>
<dbReference type="SMART" id="SM00184">
    <property type="entry name" value="RING"/>
    <property type="match status" value="1"/>
</dbReference>
<dbReference type="SUPFAM" id="SSF57850">
    <property type="entry name" value="RING/U-box"/>
    <property type="match status" value="1"/>
</dbReference>
<dbReference type="PROSITE" id="PS50089">
    <property type="entry name" value="ZF_RING_2"/>
    <property type="match status" value="1"/>
</dbReference>
<gene>
    <name evidence="5" type="primary">FLY2</name>
    <name evidence="8" type="ordered locus">At2g20650</name>
    <name evidence="9" type="ORF">F23N11.3</name>
</gene>
<sequence length="559" mass="63945">MNNLGNFGVWGFGFFSLSIWFAVLQQANGLRPIRETARSWGDEWLFGKKEKGGAGPFSAWNITGTYRGTWKFLDTVNSSSKFPDFRKESGNSVIELVTSPTKITGVHYVQGAVVFHDVFDNEHNVGGAQIKVEGVYIWPFRQLRLVANSGKKSDSGLEDDYLLSNPYHLLGIFSSQVFQESPRDRILKQKTSPIYEMEKHCNIEIAAQISQSTSSENNGDKDRYQIEGLMESPAVDDEVDCFSPLSLNATSINVEVYYNKAVNYTLMVTFVSFLQVLLLIRQMEHSNTQSGAAKVSIVMIGQQAIMDSYLCLLHLTAGILVESLFNAFATAAFFKFVVFSIFEMRYLLSIWKATRPSTSGEGWETMRRELSFLYSRFYGILLGGILLMYEFHNYMRPILLLMYSFWIPQIVANVVRDSRKPLHPYYILGMTVTRLAIPLYVFGCPKNFMRVEPSKAWCVSLCAFMGFQAGVLLLQHYFGSRCFVPRKLLPEKYSYYRRLDHNVNRSRDCVICMTTIDLRHRINDCMVTPCEHIFHSGCLQRWMDIKMECPTCRRPLPPA</sequence>
<protein>
    <recommendedName>
        <fullName evidence="6">Transmembrane E3 ubiquitin-protein ligase FLY2</fullName>
        <ecNumber evidence="6">2.3.2.27</ecNumber>
    </recommendedName>
    <alternativeName>
        <fullName evidence="5">Protein FLYING SAUCER 2</fullName>
    </alternativeName>
    <alternativeName>
        <fullName evidence="6">RING-type E3 ubiquitin transferase FLY2</fullName>
    </alternativeName>
</protein>
<accession>Q500V2</accession>
<accession>Q9SIU7</accession>
<proteinExistence type="evidence at transcript level"/>
<name>FLY2_ARATH</name>
<comment type="function">
    <text evidence="7">E3 ubiquitin-protein ligase that may be involved in xylem development.</text>
</comment>
<comment type="catalytic activity">
    <reaction evidence="6">
        <text>S-ubiquitinyl-[E2 ubiquitin-conjugating enzyme]-L-cysteine + [acceptor protein]-L-lysine = [E2 ubiquitin-conjugating enzyme]-L-cysteine + N(6)-ubiquitinyl-[acceptor protein]-L-lysine.</text>
        <dbReference type="EC" id="2.3.2.27"/>
    </reaction>
</comment>
<comment type="pathway">
    <text evidence="6">Protein modification; protein ubiquitination.</text>
</comment>
<comment type="subcellular location">
    <subcellularLocation>
        <location evidence="1">Endomembrane system</location>
        <topology evidence="2">Multi-pass membrane protein</topology>
    </subcellularLocation>
</comment>
<comment type="tissue specificity">
    <text evidence="4">Highly expressed in stems. Expressed in root xylem and seed coat.</text>
</comment>
<comment type="domain">
    <text evidence="1">The RING-type zinc finger domain is required for E3 ligase activity.</text>
</comment>
<comment type="disruption phenotype">
    <text evidence="4">No visible phenotype under normal growth conditions.</text>
</comment>
<comment type="sequence caution" evidence="6">
    <conflict type="erroneous gene model prediction">
        <sequence resource="EMBL-CDS" id="AAD21704"/>
    </conflict>
</comment>
<comment type="sequence caution" evidence="6">
    <conflict type="erroneous gene model prediction">
        <sequence resource="EMBL-CDS" id="AAM15208"/>
    </conflict>
</comment>
<organism>
    <name type="scientific">Arabidopsis thaliana</name>
    <name type="common">Mouse-ear cress</name>
    <dbReference type="NCBI Taxonomy" id="3702"/>
    <lineage>
        <taxon>Eukaryota</taxon>
        <taxon>Viridiplantae</taxon>
        <taxon>Streptophyta</taxon>
        <taxon>Embryophyta</taxon>
        <taxon>Tracheophyta</taxon>
        <taxon>Spermatophyta</taxon>
        <taxon>Magnoliopsida</taxon>
        <taxon>eudicotyledons</taxon>
        <taxon>Gunneridae</taxon>
        <taxon>Pentapetalae</taxon>
        <taxon>rosids</taxon>
        <taxon>malvids</taxon>
        <taxon>Brassicales</taxon>
        <taxon>Brassicaceae</taxon>
        <taxon>Camelineae</taxon>
        <taxon>Arabidopsis</taxon>
    </lineage>
</organism>
<evidence type="ECO:0000250" key="1">
    <source>
        <dbReference type="UniProtKB" id="Q5PP23"/>
    </source>
</evidence>
<evidence type="ECO:0000255" key="2"/>
<evidence type="ECO:0000255" key="3">
    <source>
        <dbReference type="PROSITE-ProRule" id="PRU00175"/>
    </source>
</evidence>
<evidence type="ECO:0000269" key="4">
    <source>
    </source>
</evidence>
<evidence type="ECO:0000303" key="5">
    <source>
    </source>
</evidence>
<evidence type="ECO:0000305" key="6"/>
<evidence type="ECO:0000305" key="7">
    <source>
    </source>
</evidence>
<evidence type="ECO:0000312" key="8">
    <source>
        <dbReference type="Araport" id="AT2G20650"/>
    </source>
</evidence>
<evidence type="ECO:0000312" key="9">
    <source>
        <dbReference type="EMBL" id="AEC07052.1"/>
    </source>
</evidence>
<feature type="signal peptide" evidence="2">
    <location>
        <begin position="1"/>
        <end position="29"/>
    </location>
</feature>
<feature type="chain" id="PRO_0000443823" description="Transmembrane E3 ubiquitin-protein ligase FLY2">
    <location>
        <begin position="30"/>
        <end position="559"/>
    </location>
</feature>
<feature type="topological domain" description="Lumenal" evidence="6">
    <location>
        <begin position="30"/>
        <end position="259"/>
    </location>
</feature>
<feature type="transmembrane region" description="Helical" evidence="2">
    <location>
        <begin position="260"/>
        <end position="280"/>
    </location>
</feature>
<feature type="topological domain" description="Cytoplasmic" evidence="6">
    <location>
        <begin position="281"/>
        <end position="294"/>
    </location>
</feature>
<feature type="transmembrane region" description="Helical" evidence="2">
    <location>
        <begin position="295"/>
        <end position="315"/>
    </location>
</feature>
<feature type="topological domain" description="Lumenal" evidence="6">
    <location>
        <begin position="316"/>
        <end position="318"/>
    </location>
</feature>
<feature type="transmembrane region" description="Helical" evidence="2">
    <location>
        <begin position="319"/>
        <end position="339"/>
    </location>
</feature>
<feature type="topological domain" description="Cytoplasmic" evidence="6">
    <location>
        <begin position="340"/>
        <end position="370"/>
    </location>
</feature>
<feature type="transmembrane region" description="Helical" evidence="2">
    <location>
        <begin position="371"/>
        <end position="391"/>
    </location>
</feature>
<feature type="topological domain" description="Lumenal" evidence="6">
    <location>
        <begin position="392"/>
        <end position="394"/>
    </location>
</feature>
<feature type="transmembrane region" description="Helical" evidence="2">
    <location>
        <begin position="395"/>
        <end position="415"/>
    </location>
</feature>
<feature type="topological domain" description="Cytoplasmic" evidence="6">
    <location>
        <begin position="416"/>
        <end position="423"/>
    </location>
</feature>
<feature type="transmembrane region" description="Helical" evidence="2">
    <location>
        <begin position="424"/>
        <end position="444"/>
    </location>
</feature>
<feature type="topological domain" description="Lumenal" evidence="6">
    <location>
        <begin position="445"/>
        <end position="458"/>
    </location>
</feature>
<feature type="transmembrane region" description="Helical" evidence="2">
    <location>
        <begin position="459"/>
        <end position="479"/>
    </location>
</feature>
<feature type="topological domain" description="Cytoplasmic" evidence="6">
    <location>
        <begin position="480"/>
        <end position="559"/>
    </location>
</feature>
<feature type="zinc finger region" description="RING-type; atypical" evidence="3">
    <location>
        <begin position="509"/>
        <end position="553"/>
    </location>
</feature>
<keyword id="KW-0472">Membrane</keyword>
<keyword id="KW-0479">Metal-binding</keyword>
<keyword id="KW-1185">Reference proteome</keyword>
<keyword id="KW-0732">Signal</keyword>
<keyword id="KW-0808">Transferase</keyword>
<keyword id="KW-0812">Transmembrane</keyword>
<keyword id="KW-1133">Transmembrane helix</keyword>
<keyword id="KW-0833">Ubl conjugation pathway</keyword>
<keyword id="KW-0862">Zinc</keyword>
<keyword id="KW-0863">Zinc-finger</keyword>
<reference key="1">
    <citation type="journal article" date="1999" name="Nature">
        <title>Sequence and analysis of chromosome 2 of the plant Arabidopsis thaliana.</title>
        <authorList>
            <person name="Lin X."/>
            <person name="Kaul S."/>
            <person name="Rounsley S.D."/>
            <person name="Shea T.P."/>
            <person name="Benito M.-I."/>
            <person name="Town C.D."/>
            <person name="Fujii C.Y."/>
            <person name="Mason T.M."/>
            <person name="Bowman C.L."/>
            <person name="Barnstead M.E."/>
            <person name="Feldblyum T.V."/>
            <person name="Buell C.R."/>
            <person name="Ketchum K.A."/>
            <person name="Lee J.J."/>
            <person name="Ronning C.M."/>
            <person name="Koo H.L."/>
            <person name="Moffat K.S."/>
            <person name="Cronin L.A."/>
            <person name="Shen M."/>
            <person name="Pai G."/>
            <person name="Van Aken S."/>
            <person name="Umayam L."/>
            <person name="Tallon L.J."/>
            <person name="Gill J.E."/>
            <person name="Adams M.D."/>
            <person name="Carrera A.J."/>
            <person name="Creasy T.H."/>
            <person name="Goodman H.M."/>
            <person name="Somerville C.R."/>
            <person name="Copenhaver G.P."/>
            <person name="Preuss D."/>
            <person name="Nierman W.C."/>
            <person name="White O."/>
            <person name="Eisen J.A."/>
            <person name="Salzberg S.L."/>
            <person name="Fraser C.M."/>
            <person name="Venter J.C."/>
        </authorList>
    </citation>
    <scope>NUCLEOTIDE SEQUENCE [LARGE SCALE GENOMIC DNA]</scope>
    <source>
        <strain>cv. Columbia</strain>
    </source>
</reference>
<reference key="2">
    <citation type="journal article" date="2017" name="Plant J.">
        <title>Araport11: a complete reannotation of the Arabidopsis thaliana reference genome.</title>
        <authorList>
            <person name="Cheng C.Y."/>
            <person name="Krishnakumar V."/>
            <person name="Chan A.P."/>
            <person name="Thibaud-Nissen F."/>
            <person name="Schobel S."/>
            <person name="Town C.D."/>
        </authorList>
    </citation>
    <scope>GENOME REANNOTATION</scope>
    <source>
        <strain>cv. Columbia</strain>
    </source>
</reference>
<reference key="3">
    <citation type="submission" date="2005-05" db="EMBL/GenBank/DDBJ databases">
        <title>Arabidopsis cDNA clones.</title>
        <authorList>
            <person name="Shinn P."/>
            <person name="Chen H."/>
            <person name="Cheuk R.F."/>
            <person name="Kim C.J."/>
            <person name="Ecker J.R."/>
        </authorList>
    </citation>
    <scope>NUCLEOTIDE SEQUENCE [LARGE SCALE MRNA]</scope>
    <source>
        <strain>cv. Columbia</strain>
    </source>
</reference>
<reference key="4">
    <citation type="journal article" date="2013" name="Plant Cell">
        <title>Flying saucer1 is a transmembrane RING E3 ubiquitin ligase that regulates the degree of pectin methylesterification in Arabidopsis seed mucilage.</title>
        <authorList>
            <person name="Voiniciuc C."/>
            <person name="Dean G.H."/>
            <person name="Griffiths J.S."/>
            <person name="Kirchsteiger K."/>
            <person name="Hwang Y.T."/>
            <person name="Gillett A."/>
            <person name="Dow G."/>
            <person name="Western T.L."/>
            <person name="Estelle M."/>
            <person name="Haughn G.W."/>
        </authorList>
    </citation>
    <scope>FUNCTION</scope>
    <scope>TISSUE SPECIFICITY</scope>
    <scope>DISRUPTION PHENOTYPE</scope>
</reference>